<gene>
    <name evidence="1" type="primary">murA</name>
    <name type="ordered locus">Patl_0555</name>
</gene>
<protein>
    <recommendedName>
        <fullName evidence="1">UDP-N-acetylglucosamine 1-carboxyvinyltransferase</fullName>
        <ecNumber evidence="1">2.5.1.7</ecNumber>
    </recommendedName>
    <alternativeName>
        <fullName evidence="1">Enoylpyruvate transferase</fullName>
    </alternativeName>
    <alternativeName>
        <fullName evidence="1">UDP-N-acetylglucosamine enolpyruvyl transferase</fullName>
        <shortName evidence="1">EPT</shortName>
    </alternativeName>
</protein>
<comment type="function">
    <text evidence="1">Cell wall formation. Adds enolpyruvyl to UDP-N-acetylglucosamine.</text>
</comment>
<comment type="catalytic activity">
    <reaction evidence="1">
        <text>phosphoenolpyruvate + UDP-N-acetyl-alpha-D-glucosamine = UDP-N-acetyl-3-O-(1-carboxyvinyl)-alpha-D-glucosamine + phosphate</text>
        <dbReference type="Rhea" id="RHEA:18681"/>
        <dbReference type="ChEBI" id="CHEBI:43474"/>
        <dbReference type="ChEBI" id="CHEBI:57705"/>
        <dbReference type="ChEBI" id="CHEBI:58702"/>
        <dbReference type="ChEBI" id="CHEBI:68483"/>
        <dbReference type="EC" id="2.5.1.7"/>
    </reaction>
</comment>
<comment type="pathway">
    <text evidence="1">Cell wall biogenesis; peptidoglycan biosynthesis.</text>
</comment>
<comment type="subcellular location">
    <subcellularLocation>
        <location evidence="1">Cytoplasm</location>
    </subcellularLocation>
</comment>
<comment type="similarity">
    <text evidence="1">Belongs to the EPSP synthase family. MurA subfamily.</text>
</comment>
<accession>Q15YF4</accession>
<evidence type="ECO:0000255" key="1">
    <source>
        <dbReference type="HAMAP-Rule" id="MF_00111"/>
    </source>
</evidence>
<organism>
    <name type="scientific">Pseudoalteromonas atlantica (strain T6c / ATCC BAA-1087)</name>
    <dbReference type="NCBI Taxonomy" id="3042615"/>
    <lineage>
        <taxon>Bacteria</taxon>
        <taxon>Pseudomonadati</taxon>
        <taxon>Pseudomonadota</taxon>
        <taxon>Gammaproteobacteria</taxon>
        <taxon>Alteromonadales</taxon>
        <taxon>Alteromonadaceae</taxon>
        <taxon>Paraglaciecola</taxon>
    </lineage>
</organism>
<reference key="1">
    <citation type="submission" date="2006-06" db="EMBL/GenBank/DDBJ databases">
        <title>Complete sequence of Pseudoalteromonas atlantica T6c.</title>
        <authorList>
            <consortium name="US DOE Joint Genome Institute"/>
            <person name="Copeland A."/>
            <person name="Lucas S."/>
            <person name="Lapidus A."/>
            <person name="Barry K."/>
            <person name="Detter J.C."/>
            <person name="Glavina del Rio T."/>
            <person name="Hammon N."/>
            <person name="Israni S."/>
            <person name="Dalin E."/>
            <person name="Tice H."/>
            <person name="Pitluck S."/>
            <person name="Saunders E."/>
            <person name="Brettin T."/>
            <person name="Bruce D."/>
            <person name="Han C."/>
            <person name="Tapia R."/>
            <person name="Gilna P."/>
            <person name="Schmutz J."/>
            <person name="Larimer F."/>
            <person name="Land M."/>
            <person name="Hauser L."/>
            <person name="Kyrpides N."/>
            <person name="Kim E."/>
            <person name="Karls A.C."/>
            <person name="Bartlett D."/>
            <person name="Higgins B.P."/>
            <person name="Richardson P."/>
        </authorList>
    </citation>
    <scope>NUCLEOTIDE SEQUENCE [LARGE SCALE GENOMIC DNA]</scope>
    <source>
        <strain>T6c / ATCC BAA-1087</strain>
    </source>
</reference>
<sequence>MDKLLIKASKPLQGSVRISGAKNAALPILMSSILADTTCYFDNVPELRDINTSLALLAELGADAKRVSGHAVEIDPSSINNCNASYDLVKTMRASILVLGPLLAKYGEANVSLPGGCAIGARPVNLHLQGLEKMGAKIDVEAGYIRAKVDGRLKGANIFMDMVSVGATENLMMAACLADGETVLENAAREPEIVDLANCLNAMGAKVTHAGSDKIRIQGVERLQGCRYAVLPDRIETGTFLIAAAVTGGKIRCENAAPETLDAVLDKLVMAGAVITTGDDWIELDMQGHPLTSVNIKTAPHPGFPTDMQAQFVALNCVAQGTGVVTENIFENRFMHVPELQRMGAKIDLETNSAVCHGVSSLKGAQVMATDLRASASLVIAGLVAEGETVVDRIYHLDRGYEHIETKLNGLGANIQRIK</sequence>
<dbReference type="EC" id="2.5.1.7" evidence="1"/>
<dbReference type="EMBL" id="CP000388">
    <property type="protein sequence ID" value="ABG39084.1"/>
    <property type="molecule type" value="Genomic_DNA"/>
</dbReference>
<dbReference type="RefSeq" id="WP_011573464.1">
    <property type="nucleotide sequence ID" value="NC_008228.1"/>
</dbReference>
<dbReference type="SMR" id="Q15YF4"/>
<dbReference type="STRING" id="342610.Patl_0555"/>
<dbReference type="KEGG" id="pat:Patl_0555"/>
<dbReference type="eggNOG" id="COG0766">
    <property type="taxonomic scope" value="Bacteria"/>
</dbReference>
<dbReference type="HOGENOM" id="CLU_027387_0_0_6"/>
<dbReference type="OrthoDB" id="9803760at2"/>
<dbReference type="UniPathway" id="UPA00219"/>
<dbReference type="Proteomes" id="UP000001981">
    <property type="component" value="Chromosome"/>
</dbReference>
<dbReference type="GO" id="GO:0005737">
    <property type="term" value="C:cytoplasm"/>
    <property type="evidence" value="ECO:0007669"/>
    <property type="project" value="UniProtKB-SubCell"/>
</dbReference>
<dbReference type="GO" id="GO:0008760">
    <property type="term" value="F:UDP-N-acetylglucosamine 1-carboxyvinyltransferase activity"/>
    <property type="evidence" value="ECO:0007669"/>
    <property type="project" value="UniProtKB-UniRule"/>
</dbReference>
<dbReference type="GO" id="GO:0051301">
    <property type="term" value="P:cell division"/>
    <property type="evidence" value="ECO:0007669"/>
    <property type="project" value="UniProtKB-KW"/>
</dbReference>
<dbReference type="GO" id="GO:0071555">
    <property type="term" value="P:cell wall organization"/>
    <property type="evidence" value="ECO:0007669"/>
    <property type="project" value="UniProtKB-KW"/>
</dbReference>
<dbReference type="GO" id="GO:0009252">
    <property type="term" value="P:peptidoglycan biosynthetic process"/>
    <property type="evidence" value="ECO:0007669"/>
    <property type="project" value="UniProtKB-UniRule"/>
</dbReference>
<dbReference type="GO" id="GO:0008360">
    <property type="term" value="P:regulation of cell shape"/>
    <property type="evidence" value="ECO:0007669"/>
    <property type="project" value="UniProtKB-KW"/>
</dbReference>
<dbReference type="GO" id="GO:0019277">
    <property type="term" value="P:UDP-N-acetylgalactosamine biosynthetic process"/>
    <property type="evidence" value="ECO:0007669"/>
    <property type="project" value="InterPro"/>
</dbReference>
<dbReference type="CDD" id="cd01555">
    <property type="entry name" value="UdpNAET"/>
    <property type="match status" value="1"/>
</dbReference>
<dbReference type="FunFam" id="3.65.10.10:FF:000002">
    <property type="entry name" value="UDP-N-acetylglucosamine 1-carboxyvinyltransferase"/>
    <property type="match status" value="1"/>
</dbReference>
<dbReference type="Gene3D" id="3.65.10.10">
    <property type="entry name" value="Enolpyruvate transferase domain"/>
    <property type="match status" value="2"/>
</dbReference>
<dbReference type="HAMAP" id="MF_00111">
    <property type="entry name" value="MurA"/>
    <property type="match status" value="1"/>
</dbReference>
<dbReference type="InterPro" id="IPR001986">
    <property type="entry name" value="Enolpyruvate_Tfrase_dom"/>
</dbReference>
<dbReference type="InterPro" id="IPR036968">
    <property type="entry name" value="Enolpyruvate_Tfrase_sf"/>
</dbReference>
<dbReference type="InterPro" id="IPR050068">
    <property type="entry name" value="MurA_subfamily"/>
</dbReference>
<dbReference type="InterPro" id="IPR013792">
    <property type="entry name" value="RNA3'P_cycl/enolpyr_Trfase_a/b"/>
</dbReference>
<dbReference type="InterPro" id="IPR005750">
    <property type="entry name" value="UDP_GlcNAc_COvinyl_MurA"/>
</dbReference>
<dbReference type="NCBIfam" id="TIGR01072">
    <property type="entry name" value="murA"/>
    <property type="match status" value="1"/>
</dbReference>
<dbReference type="NCBIfam" id="NF006873">
    <property type="entry name" value="PRK09369.1"/>
    <property type="match status" value="1"/>
</dbReference>
<dbReference type="PANTHER" id="PTHR43783">
    <property type="entry name" value="UDP-N-ACETYLGLUCOSAMINE 1-CARBOXYVINYLTRANSFERASE"/>
    <property type="match status" value="1"/>
</dbReference>
<dbReference type="PANTHER" id="PTHR43783:SF1">
    <property type="entry name" value="UDP-N-ACETYLGLUCOSAMINE 1-CARBOXYVINYLTRANSFERASE"/>
    <property type="match status" value="1"/>
</dbReference>
<dbReference type="Pfam" id="PF00275">
    <property type="entry name" value="EPSP_synthase"/>
    <property type="match status" value="1"/>
</dbReference>
<dbReference type="SUPFAM" id="SSF55205">
    <property type="entry name" value="EPT/RTPC-like"/>
    <property type="match status" value="1"/>
</dbReference>
<name>MURA_PSEA6</name>
<proteinExistence type="inferred from homology"/>
<feature type="chain" id="PRO_1000023070" description="UDP-N-acetylglucosamine 1-carboxyvinyltransferase">
    <location>
        <begin position="1"/>
        <end position="419"/>
    </location>
</feature>
<feature type="active site" description="Proton donor" evidence="1">
    <location>
        <position position="117"/>
    </location>
</feature>
<feature type="binding site" evidence="1">
    <location>
        <begin position="22"/>
        <end position="23"/>
    </location>
    <ligand>
        <name>phosphoenolpyruvate</name>
        <dbReference type="ChEBI" id="CHEBI:58702"/>
    </ligand>
</feature>
<feature type="binding site" evidence="1">
    <location>
        <position position="93"/>
    </location>
    <ligand>
        <name>UDP-N-acetyl-alpha-D-glucosamine</name>
        <dbReference type="ChEBI" id="CHEBI:57705"/>
    </ligand>
</feature>
<feature type="binding site" evidence="1">
    <location>
        <position position="307"/>
    </location>
    <ligand>
        <name>UDP-N-acetyl-alpha-D-glucosamine</name>
        <dbReference type="ChEBI" id="CHEBI:57705"/>
    </ligand>
</feature>
<feature type="binding site" evidence="1">
    <location>
        <position position="329"/>
    </location>
    <ligand>
        <name>UDP-N-acetyl-alpha-D-glucosamine</name>
        <dbReference type="ChEBI" id="CHEBI:57705"/>
    </ligand>
</feature>
<feature type="modified residue" description="2-(S-cysteinyl)pyruvic acid O-phosphothioketal" evidence="1">
    <location>
        <position position="117"/>
    </location>
</feature>
<keyword id="KW-0131">Cell cycle</keyword>
<keyword id="KW-0132">Cell division</keyword>
<keyword id="KW-0133">Cell shape</keyword>
<keyword id="KW-0961">Cell wall biogenesis/degradation</keyword>
<keyword id="KW-0963">Cytoplasm</keyword>
<keyword id="KW-0573">Peptidoglycan synthesis</keyword>
<keyword id="KW-0670">Pyruvate</keyword>
<keyword id="KW-0808">Transferase</keyword>